<dbReference type="EC" id="2.8.1.6" evidence="1"/>
<dbReference type="EMBL" id="CP001132">
    <property type="protein sequence ID" value="ACH82690.1"/>
    <property type="molecule type" value="Genomic_DNA"/>
</dbReference>
<dbReference type="RefSeq" id="WP_012536051.1">
    <property type="nucleotide sequence ID" value="NC_011206.1"/>
</dbReference>
<dbReference type="SMR" id="B5ELR8"/>
<dbReference type="GeneID" id="65279641"/>
<dbReference type="KEGG" id="afe:Lferr_0436"/>
<dbReference type="eggNOG" id="COG0502">
    <property type="taxonomic scope" value="Bacteria"/>
</dbReference>
<dbReference type="HOGENOM" id="CLU_033172_1_2_6"/>
<dbReference type="UniPathway" id="UPA00078">
    <property type="reaction ID" value="UER00162"/>
</dbReference>
<dbReference type="GO" id="GO:0051537">
    <property type="term" value="F:2 iron, 2 sulfur cluster binding"/>
    <property type="evidence" value="ECO:0007669"/>
    <property type="project" value="UniProtKB-KW"/>
</dbReference>
<dbReference type="GO" id="GO:0051539">
    <property type="term" value="F:4 iron, 4 sulfur cluster binding"/>
    <property type="evidence" value="ECO:0007669"/>
    <property type="project" value="UniProtKB-KW"/>
</dbReference>
<dbReference type="GO" id="GO:0004076">
    <property type="term" value="F:biotin synthase activity"/>
    <property type="evidence" value="ECO:0007669"/>
    <property type="project" value="UniProtKB-UniRule"/>
</dbReference>
<dbReference type="GO" id="GO:0005506">
    <property type="term" value="F:iron ion binding"/>
    <property type="evidence" value="ECO:0007669"/>
    <property type="project" value="UniProtKB-UniRule"/>
</dbReference>
<dbReference type="GO" id="GO:0009102">
    <property type="term" value="P:biotin biosynthetic process"/>
    <property type="evidence" value="ECO:0007669"/>
    <property type="project" value="UniProtKB-UniRule"/>
</dbReference>
<dbReference type="CDD" id="cd01335">
    <property type="entry name" value="Radical_SAM"/>
    <property type="match status" value="1"/>
</dbReference>
<dbReference type="Gene3D" id="3.20.20.70">
    <property type="entry name" value="Aldolase class I"/>
    <property type="match status" value="1"/>
</dbReference>
<dbReference type="HAMAP" id="MF_01694">
    <property type="entry name" value="BioB"/>
    <property type="match status" value="1"/>
</dbReference>
<dbReference type="InterPro" id="IPR013785">
    <property type="entry name" value="Aldolase_TIM"/>
</dbReference>
<dbReference type="InterPro" id="IPR010722">
    <property type="entry name" value="BATS_dom"/>
</dbReference>
<dbReference type="InterPro" id="IPR002684">
    <property type="entry name" value="Biotin_synth/BioAB"/>
</dbReference>
<dbReference type="InterPro" id="IPR024177">
    <property type="entry name" value="Biotin_synthase"/>
</dbReference>
<dbReference type="InterPro" id="IPR006638">
    <property type="entry name" value="Elp3/MiaA/NifB-like_rSAM"/>
</dbReference>
<dbReference type="InterPro" id="IPR007197">
    <property type="entry name" value="rSAM"/>
</dbReference>
<dbReference type="NCBIfam" id="TIGR00433">
    <property type="entry name" value="bioB"/>
    <property type="match status" value="1"/>
</dbReference>
<dbReference type="PANTHER" id="PTHR22976">
    <property type="entry name" value="BIOTIN SYNTHASE"/>
    <property type="match status" value="1"/>
</dbReference>
<dbReference type="PANTHER" id="PTHR22976:SF2">
    <property type="entry name" value="BIOTIN SYNTHASE, MITOCHONDRIAL"/>
    <property type="match status" value="1"/>
</dbReference>
<dbReference type="Pfam" id="PF06968">
    <property type="entry name" value="BATS"/>
    <property type="match status" value="1"/>
</dbReference>
<dbReference type="Pfam" id="PF04055">
    <property type="entry name" value="Radical_SAM"/>
    <property type="match status" value="1"/>
</dbReference>
<dbReference type="PIRSF" id="PIRSF001619">
    <property type="entry name" value="Biotin_synth"/>
    <property type="match status" value="1"/>
</dbReference>
<dbReference type="SFLD" id="SFLDF00272">
    <property type="entry name" value="biotin_synthase"/>
    <property type="match status" value="1"/>
</dbReference>
<dbReference type="SFLD" id="SFLDG01278">
    <property type="entry name" value="biotin_synthase_like"/>
    <property type="match status" value="1"/>
</dbReference>
<dbReference type="SMART" id="SM00876">
    <property type="entry name" value="BATS"/>
    <property type="match status" value="1"/>
</dbReference>
<dbReference type="SMART" id="SM00729">
    <property type="entry name" value="Elp3"/>
    <property type="match status" value="1"/>
</dbReference>
<dbReference type="SUPFAM" id="SSF102114">
    <property type="entry name" value="Radical SAM enzymes"/>
    <property type="match status" value="1"/>
</dbReference>
<dbReference type="PROSITE" id="PS51918">
    <property type="entry name" value="RADICAL_SAM"/>
    <property type="match status" value="1"/>
</dbReference>
<keyword id="KW-0001">2Fe-2S</keyword>
<keyword id="KW-0004">4Fe-4S</keyword>
<keyword id="KW-0093">Biotin biosynthesis</keyword>
<keyword id="KW-0408">Iron</keyword>
<keyword id="KW-0411">Iron-sulfur</keyword>
<keyword id="KW-0479">Metal-binding</keyword>
<keyword id="KW-0949">S-adenosyl-L-methionine</keyword>
<keyword id="KW-0808">Transferase</keyword>
<organism>
    <name type="scientific">Acidithiobacillus ferrooxidans (strain ATCC 53993 / BNL-5-31)</name>
    <name type="common">Leptospirillum ferrooxidans (ATCC 53993)</name>
    <dbReference type="NCBI Taxonomy" id="380394"/>
    <lineage>
        <taxon>Bacteria</taxon>
        <taxon>Pseudomonadati</taxon>
        <taxon>Pseudomonadota</taxon>
        <taxon>Acidithiobacillia</taxon>
        <taxon>Acidithiobacillales</taxon>
        <taxon>Acidithiobacillaceae</taxon>
        <taxon>Acidithiobacillus</taxon>
    </lineage>
</organism>
<feature type="chain" id="PRO_0000381178" description="Biotin synthase">
    <location>
        <begin position="1"/>
        <end position="316"/>
    </location>
</feature>
<feature type="domain" description="Radical SAM core" evidence="2">
    <location>
        <begin position="39"/>
        <end position="263"/>
    </location>
</feature>
<feature type="binding site" evidence="1">
    <location>
        <position position="54"/>
    </location>
    <ligand>
        <name>[4Fe-4S] cluster</name>
        <dbReference type="ChEBI" id="CHEBI:49883"/>
        <note>4Fe-4S-S-AdoMet</note>
    </ligand>
</feature>
<feature type="binding site" evidence="1">
    <location>
        <position position="58"/>
    </location>
    <ligand>
        <name>[4Fe-4S] cluster</name>
        <dbReference type="ChEBI" id="CHEBI:49883"/>
        <note>4Fe-4S-S-AdoMet</note>
    </ligand>
</feature>
<feature type="binding site" evidence="1">
    <location>
        <position position="61"/>
    </location>
    <ligand>
        <name>[4Fe-4S] cluster</name>
        <dbReference type="ChEBI" id="CHEBI:49883"/>
        <note>4Fe-4S-S-AdoMet</note>
    </ligand>
</feature>
<feature type="binding site" evidence="1">
    <location>
        <position position="98"/>
    </location>
    <ligand>
        <name>[2Fe-2S] cluster</name>
        <dbReference type="ChEBI" id="CHEBI:190135"/>
    </ligand>
</feature>
<feature type="binding site" evidence="1">
    <location>
        <position position="129"/>
    </location>
    <ligand>
        <name>[2Fe-2S] cluster</name>
        <dbReference type="ChEBI" id="CHEBI:190135"/>
    </ligand>
</feature>
<feature type="binding site" evidence="1">
    <location>
        <position position="189"/>
    </location>
    <ligand>
        <name>[2Fe-2S] cluster</name>
        <dbReference type="ChEBI" id="CHEBI:190135"/>
    </ligand>
</feature>
<feature type="binding site" evidence="1">
    <location>
        <position position="261"/>
    </location>
    <ligand>
        <name>[2Fe-2S] cluster</name>
        <dbReference type="ChEBI" id="CHEBI:190135"/>
    </ligand>
</feature>
<comment type="function">
    <text evidence="1">Catalyzes the conversion of dethiobiotin (DTB) to biotin by the insertion of a sulfur atom into dethiobiotin via a radical-based mechanism.</text>
</comment>
<comment type="catalytic activity">
    <reaction evidence="1">
        <text>(4R,5S)-dethiobiotin + (sulfur carrier)-SH + 2 reduced [2Fe-2S]-[ferredoxin] + 2 S-adenosyl-L-methionine = (sulfur carrier)-H + biotin + 2 5'-deoxyadenosine + 2 L-methionine + 2 oxidized [2Fe-2S]-[ferredoxin]</text>
        <dbReference type="Rhea" id="RHEA:22060"/>
        <dbReference type="Rhea" id="RHEA-COMP:10000"/>
        <dbReference type="Rhea" id="RHEA-COMP:10001"/>
        <dbReference type="Rhea" id="RHEA-COMP:14737"/>
        <dbReference type="Rhea" id="RHEA-COMP:14739"/>
        <dbReference type="ChEBI" id="CHEBI:17319"/>
        <dbReference type="ChEBI" id="CHEBI:29917"/>
        <dbReference type="ChEBI" id="CHEBI:33737"/>
        <dbReference type="ChEBI" id="CHEBI:33738"/>
        <dbReference type="ChEBI" id="CHEBI:57586"/>
        <dbReference type="ChEBI" id="CHEBI:57844"/>
        <dbReference type="ChEBI" id="CHEBI:59789"/>
        <dbReference type="ChEBI" id="CHEBI:64428"/>
        <dbReference type="ChEBI" id="CHEBI:149473"/>
        <dbReference type="EC" id="2.8.1.6"/>
    </reaction>
</comment>
<comment type="cofactor">
    <cofactor evidence="1">
        <name>[4Fe-4S] cluster</name>
        <dbReference type="ChEBI" id="CHEBI:49883"/>
    </cofactor>
    <text evidence="1">Binds 1 [4Fe-4S] cluster. The cluster is coordinated with 3 cysteines and an exchangeable S-adenosyl-L-methionine.</text>
</comment>
<comment type="cofactor">
    <cofactor evidence="1">
        <name>[2Fe-2S] cluster</name>
        <dbReference type="ChEBI" id="CHEBI:190135"/>
    </cofactor>
    <text evidence="1">Binds 1 [2Fe-2S] cluster. The cluster is coordinated with 3 cysteines and 1 arginine.</text>
</comment>
<comment type="pathway">
    <text evidence="1">Cofactor biosynthesis; biotin biosynthesis; biotin from 7,8-diaminononanoate: step 2/2.</text>
</comment>
<comment type="subunit">
    <text evidence="1">Homodimer.</text>
</comment>
<comment type="similarity">
    <text evidence="1">Belongs to the radical SAM superfamily. Biotin synthase family.</text>
</comment>
<name>BIOB_ACIF5</name>
<reference key="1">
    <citation type="submission" date="2008-08" db="EMBL/GenBank/DDBJ databases">
        <title>Complete sequence of Acidithiobacillus ferrooxidans ATCC 53993.</title>
        <authorList>
            <person name="Lucas S."/>
            <person name="Copeland A."/>
            <person name="Lapidus A."/>
            <person name="Glavina del Rio T."/>
            <person name="Dalin E."/>
            <person name="Tice H."/>
            <person name="Bruce D."/>
            <person name="Goodwin L."/>
            <person name="Pitluck S."/>
            <person name="Sims D."/>
            <person name="Brettin T."/>
            <person name="Detter J.C."/>
            <person name="Han C."/>
            <person name="Kuske C.R."/>
            <person name="Larimer F."/>
            <person name="Land M."/>
            <person name="Hauser L."/>
            <person name="Kyrpides N."/>
            <person name="Lykidis A."/>
            <person name="Borole A.P."/>
        </authorList>
    </citation>
    <scope>NUCLEOTIDE SEQUENCE [LARGE SCALE GENOMIC DNA]</scope>
    <source>
        <strain>ATCC 53993 / BNL-5-31</strain>
    </source>
</reference>
<gene>
    <name evidence="1" type="primary">bioB</name>
    <name type="ordered locus">Lferr_0436</name>
</gene>
<evidence type="ECO:0000255" key="1">
    <source>
        <dbReference type="HAMAP-Rule" id="MF_01694"/>
    </source>
</evidence>
<evidence type="ECO:0000255" key="2">
    <source>
        <dbReference type="PROSITE-ProRule" id="PRU01266"/>
    </source>
</evidence>
<protein>
    <recommendedName>
        <fullName evidence="1">Biotin synthase</fullName>
        <ecNumber evidence="1">2.8.1.6</ecNumber>
    </recommendedName>
</protein>
<proteinExistence type="inferred from homology"/>
<accession>B5ELR8</accession>
<sequence length="316" mass="34539">MNNSTALQTLDAILEIYARPFNDLIYAAQQVHRLHFDPNAIQCSTLLSIKTGGCPEDCGYCSQSVHHQTALQAEPLMDLEQVRAAAREAKANGAQRLCMGAAWRSPHDRDIEKVAAMIGVVKEYGLESCVTLGMLKPGQAERLQHAGLDYYNHNLDTSPEFYGEVIHTRSYQDRLDTLEAVRDAGIRICSGGILGMGESRRDRARMLQVLAQLPQAPESIPINALVPIPGTPLEAAEPIDGFEFVRTVAVTRILFPKAYVRLSAGREAMSDELQALAFLAGANSIFLGDRLLTTGNASTGHDQALFNRLGLHRSAD</sequence>